<comment type="function">
    <text evidence="3 5 6 7">V region of the variable domain of T cell receptor (TR) alpha chain that participates in the antigen recognition (PubMed:24600447). Alpha-beta T cell receptors are antigen specific receptors which are essential to the immune response and are present on the cell surface of T lymphocytes. Recognize peptide-major histocompatibility (MH) (pMH) complexes that are displayed by antigen presenting cells (APC), a prerequisite for efficient T cell adaptive immunity against pathogens (PubMed:25493333). Binding of alpha-beta TR to pMH complex initiates TR-CD3 clustering on the cell surface and intracellular activation of LCK that phosphorylates the ITAM motifs of CD3G, CD3D, CD3E and CD247 enabling the recruitment of ZAP70. In turn ZAP70 phosphorylates LAT, which recruits numerous signaling molecules to form the LAT signalosome. The LAT signalosome propagates signal branching to three major signaling pathways, the calcium, the mitogen-activated protein kinase (MAPK) kinase and the nuclear factor NF-kappa-B (NF-kB) pathways, leading to the mobilization of transcription factors that are critical for gene expression and essential for T cell growth and differentiation (PubMed:23524462). The T cell repertoire is generated in the thymus, by V-(D)-J rearrangement. This repertoire is then shaped by intrathymic selection events to generate a peripheral T cell pool of self-MH restricted, non-autoaggressive T cells. Post-thymic interaction of alpha-beta TR with the pMH complexes shapes TR structural and functional avidity (PubMed:15040585).</text>
</comment>
<comment type="subunit">
    <text evidence="4">Alpha-beta TR is a heterodimer composed of an alpha and beta chain; disulfide-linked. The alpha-beta TR is associated with the transmembrane signaling CD3 coreceptor proteins to form the TR-CD3 (TcR or TCR). The assembly of alpha-beta TR heterodimers with CD3 occurs in the endoplasmic reticulum where a single alpha-beta TR heterodimer associates with one CD3D-CD3E heterodimer, one CD3G-CD3E heterodimer and one CD247 homodimer forming a stable octameric structure. CD3D-CD3E and CD3G-CD3E heterodimers preferentially associate with TR alpha and TR beta chains, respectively. The association of the CD247 homodimer is the last step of TcR assembly in the endoplasmic reticulum and is required for transport to the cell surface.</text>
</comment>
<comment type="subcellular location">
    <subcellularLocation>
        <location evidence="4">Cell membrane</location>
    </subcellularLocation>
</comment>
<comment type="polymorphism">
    <text evidence="9">There are several alleles. The sequence shown is that of IMGT allele TRAV10*01.</text>
</comment>
<accession>A0A0B4J240</accession>
<name>TVA10_HUMAN</name>
<organism>
    <name type="scientific">Homo sapiens</name>
    <name type="common">Human</name>
    <dbReference type="NCBI Taxonomy" id="9606"/>
    <lineage>
        <taxon>Eukaryota</taxon>
        <taxon>Metazoa</taxon>
        <taxon>Chordata</taxon>
        <taxon>Craniata</taxon>
        <taxon>Vertebrata</taxon>
        <taxon>Euteleostomi</taxon>
        <taxon>Mammalia</taxon>
        <taxon>Eutheria</taxon>
        <taxon>Euarchontoglires</taxon>
        <taxon>Primates</taxon>
        <taxon>Haplorrhini</taxon>
        <taxon>Catarrhini</taxon>
        <taxon>Hominidae</taxon>
        <taxon>Homo</taxon>
    </lineage>
</organism>
<evidence type="ECO:0000255" key="1"/>
<evidence type="ECO:0000255" key="2">
    <source>
        <dbReference type="PROSITE-ProRule" id="PRU00114"/>
    </source>
</evidence>
<evidence type="ECO:0000303" key="3">
    <source>
    </source>
</evidence>
<evidence type="ECO:0000303" key="4">
    <source>
    </source>
</evidence>
<evidence type="ECO:0000303" key="5">
    <source>
    </source>
</evidence>
<evidence type="ECO:0000303" key="6">
    <source>
    </source>
</evidence>
<evidence type="ECO:0000303" key="7">
    <source>
    </source>
</evidence>
<evidence type="ECO:0000303" key="8">
    <source ref="2"/>
</evidence>
<evidence type="ECO:0000305" key="9"/>
<proteinExistence type="evidence at protein level"/>
<reference key="1">
    <citation type="journal article" date="2003" name="Nature">
        <title>The DNA sequence and analysis of human chromosome 14.</title>
        <authorList>
            <person name="Heilig R."/>
            <person name="Eckenberg R."/>
            <person name="Petit J.-L."/>
            <person name="Fonknechten N."/>
            <person name="Da Silva C."/>
            <person name="Cattolico L."/>
            <person name="Levy M."/>
            <person name="Barbe V."/>
            <person name="De Berardinis V."/>
            <person name="Ureta-Vidal A."/>
            <person name="Pelletier E."/>
            <person name="Vico V."/>
            <person name="Anthouard V."/>
            <person name="Rowen L."/>
            <person name="Madan A."/>
            <person name="Qin S."/>
            <person name="Sun H."/>
            <person name="Du H."/>
            <person name="Pepin K."/>
            <person name="Artiguenave F."/>
            <person name="Robert C."/>
            <person name="Cruaud C."/>
            <person name="Bruels T."/>
            <person name="Jaillon O."/>
            <person name="Friedlander L."/>
            <person name="Samson G."/>
            <person name="Brottier P."/>
            <person name="Cure S."/>
            <person name="Segurens B."/>
            <person name="Aniere F."/>
            <person name="Samain S."/>
            <person name="Crespeau H."/>
            <person name="Abbasi N."/>
            <person name="Aiach N."/>
            <person name="Boscus D."/>
            <person name="Dickhoff R."/>
            <person name="Dors M."/>
            <person name="Dubois I."/>
            <person name="Friedman C."/>
            <person name="Gouyvenoux M."/>
            <person name="James R."/>
            <person name="Madan A."/>
            <person name="Mairey-Estrada B."/>
            <person name="Mangenot S."/>
            <person name="Martins N."/>
            <person name="Menard M."/>
            <person name="Oztas S."/>
            <person name="Ratcliffe A."/>
            <person name="Shaffer T."/>
            <person name="Trask B."/>
            <person name="Vacherie B."/>
            <person name="Bellemere C."/>
            <person name="Belser C."/>
            <person name="Besnard-Gonnet M."/>
            <person name="Bartol-Mavel D."/>
            <person name="Boutard M."/>
            <person name="Briez-Silla S."/>
            <person name="Combette S."/>
            <person name="Dufosse-Laurent V."/>
            <person name="Ferron C."/>
            <person name="Lechaplais C."/>
            <person name="Louesse C."/>
            <person name="Muselet D."/>
            <person name="Magdelenat G."/>
            <person name="Pateau E."/>
            <person name="Petit E."/>
            <person name="Sirvain-Trukniewicz P."/>
            <person name="Trybou A."/>
            <person name="Vega-Czarny N."/>
            <person name="Bataille E."/>
            <person name="Bluet E."/>
            <person name="Bordelais I."/>
            <person name="Dubois M."/>
            <person name="Dumont C."/>
            <person name="Guerin T."/>
            <person name="Haffray S."/>
            <person name="Hammadi R."/>
            <person name="Muanga J."/>
            <person name="Pellouin V."/>
            <person name="Robert D."/>
            <person name="Wunderle E."/>
            <person name="Gauguet G."/>
            <person name="Roy A."/>
            <person name="Sainte-Marthe L."/>
            <person name="Verdier J."/>
            <person name="Verdier-Discala C."/>
            <person name="Hillier L.W."/>
            <person name="Fulton L."/>
            <person name="McPherson J."/>
            <person name="Matsuda F."/>
            <person name="Wilson R."/>
            <person name="Scarpelli C."/>
            <person name="Gyapay G."/>
            <person name="Wincker P."/>
            <person name="Saurin W."/>
            <person name="Quetier F."/>
            <person name="Waterston R."/>
            <person name="Hood L."/>
            <person name="Weissenbach J."/>
        </authorList>
    </citation>
    <scope>NUCLEOTIDE SEQUENCE [LARGE SCALE GENOMIC DNA] (IMGT ALLELE TRAV10*01)</scope>
</reference>
<reference key="2">
    <citation type="book" date="2001" name="The T Cell Receptor FactsBook.">
        <title>The T Cell Receptor FactsBook.</title>
        <editorList>
            <person name="Lefranc M.P."/>
            <person name="Lefranc G."/>
        </editorList>
        <authorList>
            <person name="Lefranc M.P."/>
            <person name="Lefranc G."/>
        </authorList>
    </citation>
    <scope>NOMENCLATURE</scope>
</reference>
<reference key="3">
    <citation type="journal article" date="2004" name="Nat. Rev. Immunol.">
        <title>The many important facets of T-cell repertoire diversity.</title>
        <authorList>
            <person name="Nikolich-Zugich J."/>
            <person name="Slifka M.K."/>
            <person name="Messaoudi I."/>
        </authorList>
    </citation>
    <scope>REVIEW ON T CELL REPERTOIRE DIVERSITY</scope>
</reference>
<reference key="4">
    <citation type="journal article" date="2010" name="Cold Spring Harb. Perspect. Biol.">
        <title>Structural biology of the T-cell receptor: insights into receptor assembly, ligand recognition, and initiation of signaling.</title>
        <authorList>
            <person name="Wucherpfennig K.W."/>
            <person name="Gagnon E."/>
            <person name="Call M.J."/>
            <person name="Huseby E.S."/>
            <person name="Call M.E."/>
        </authorList>
    </citation>
    <scope>REVIEW ON T CELL RECEPTOR-CD3 COMPLEX ASSEMBLY</scope>
    <scope>SUBCELLULAR LOCATION</scope>
</reference>
<reference key="5">
    <citation type="journal article" date="2013" name="Nat. Rev. Immunol.">
        <title>T cell receptor signalling networks: branched, diversified and bounded.</title>
        <authorList>
            <person name="Brownlie R.J."/>
            <person name="Zamoyska R."/>
        </authorList>
    </citation>
    <scope>REVIEW ON T CELL RECEPTOR SIGNALING</scope>
</reference>
<reference key="6">
    <citation type="journal article" date="2014" name="Front. Immunol.">
        <title>Immunoglobulin and T Cell Receptor Genes: IMGT((R)) and the Birth and Rise of Immunoinformatics.</title>
        <authorList>
            <person name="Lefranc M.P."/>
        </authorList>
    </citation>
    <scope>NOMENCLATURE</scope>
</reference>
<reference key="7">
    <citation type="journal article" date="2015" name="Annu. Rev. Immunol.">
        <title>T cell antigen receptor recognition of antigen-presenting molecules.</title>
        <authorList>
            <person name="Rossjohn J."/>
            <person name="Gras S."/>
            <person name="Miles J.J."/>
            <person name="Turner S.J."/>
            <person name="Godfrey D.I."/>
            <person name="McCluskey J."/>
        </authorList>
    </citation>
    <scope>REVIEW ON FUNCTION</scope>
</reference>
<keyword id="KW-0002">3D-structure</keyword>
<keyword id="KW-1064">Adaptive immunity</keyword>
<keyword id="KW-1003">Cell membrane</keyword>
<keyword id="KW-1015">Disulfide bond</keyword>
<keyword id="KW-0325">Glycoprotein</keyword>
<keyword id="KW-0391">Immunity</keyword>
<keyword id="KW-0393">Immunoglobulin domain</keyword>
<keyword id="KW-0472">Membrane</keyword>
<keyword id="KW-0675">Receptor</keyword>
<keyword id="KW-1185">Reference proteome</keyword>
<keyword id="KW-0732">Signal</keyword>
<keyword id="KW-1279">T cell receptor</keyword>
<sequence length="114" mass="12852">MKKHLTTFLVILWLYFYRGNGKNQVEQSPQSLIILEGKNCTLQCNYTVSPFSNLRWYKQDTGRGPVSLTIMTFSENTKSNGRYTATLDADTKQSSLHITASQLSDSASYICVVS</sequence>
<protein>
    <recommendedName>
        <fullName evidence="8">T cell receptor alpha variable 10</fullName>
    </recommendedName>
</protein>
<dbReference type="EMBL" id="AC243980">
    <property type="status" value="NOT_ANNOTATED_CDS"/>
    <property type="molecule type" value="Genomic_DNA"/>
</dbReference>
<dbReference type="PDB" id="6V80">
    <property type="method" value="X-ray"/>
    <property type="resolution" value="3.53 A"/>
    <property type="chains" value="C/H=22-114"/>
</dbReference>
<dbReference type="PDBsum" id="6V80"/>
<dbReference type="SMR" id="A0A0B4J240"/>
<dbReference type="FunCoup" id="A0A0B4J240">
    <property type="interactions" value="337"/>
</dbReference>
<dbReference type="IMGT_GENE-DB" id="TRAV10"/>
<dbReference type="GlyCosmos" id="A0A0B4J240">
    <property type="glycosylation" value="2 sites, No reported glycans"/>
</dbReference>
<dbReference type="GlyGen" id="A0A0B4J240">
    <property type="glycosylation" value="2 sites"/>
</dbReference>
<dbReference type="BioMuta" id="TRAV10"/>
<dbReference type="Ensembl" id="ENST00000390432.2">
    <property type="protein sequence ID" value="ENSP00000440313.1"/>
    <property type="gene ID" value="ENSG00000211784.2"/>
</dbReference>
<dbReference type="AGR" id="HGNC:12103"/>
<dbReference type="GeneCards" id="TRAV10"/>
<dbReference type="HGNC" id="HGNC:12103">
    <property type="gene designation" value="TRAV10"/>
</dbReference>
<dbReference type="HPA" id="ENSG00000211784">
    <property type="expression patterns" value="Tissue enriched (lymphoid)"/>
</dbReference>
<dbReference type="neXtProt" id="NX_A0A0B4J240"/>
<dbReference type="OpenTargets" id="ENSG00000211784"/>
<dbReference type="VEuPathDB" id="HostDB:ENSG00000211784"/>
<dbReference type="GeneTree" id="ENSGT00940000163906"/>
<dbReference type="HOGENOM" id="CLU_077975_8_3_1"/>
<dbReference type="InParanoid" id="A0A0B4J240"/>
<dbReference type="OMA" id="ENCTFQC"/>
<dbReference type="OrthoDB" id="9612324at2759"/>
<dbReference type="PAN-GO" id="A0A0B4J240">
    <property type="GO annotations" value="1 GO annotation based on evolutionary models"/>
</dbReference>
<dbReference type="PhylomeDB" id="A0A0B4J240"/>
<dbReference type="SignaLink" id="A0A0B4J240"/>
<dbReference type="ChiTaRS" id="TRAV10">
    <property type="organism name" value="human"/>
</dbReference>
<dbReference type="Pharos" id="A0A0B4J240">
    <property type="development level" value="Tdark"/>
</dbReference>
<dbReference type="PRO" id="PR:A0A0B4J240"/>
<dbReference type="Proteomes" id="UP000005640">
    <property type="component" value="Chromosome 14"/>
</dbReference>
<dbReference type="RNAct" id="A0A0B4J240">
    <property type="molecule type" value="protein"/>
</dbReference>
<dbReference type="Bgee" id="ENSG00000211784">
    <property type="expression patterns" value="Expressed in lymph node and 109 other cell types or tissues"/>
</dbReference>
<dbReference type="GO" id="GO:0042101">
    <property type="term" value="C:T cell receptor complex"/>
    <property type="evidence" value="ECO:0007669"/>
    <property type="project" value="UniProtKB-KW"/>
</dbReference>
<dbReference type="GO" id="GO:0002250">
    <property type="term" value="P:adaptive immune response"/>
    <property type="evidence" value="ECO:0007669"/>
    <property type="project" value="UniProtKB-KW"/>
</dbReference>
<dbReference type="GO" id="GO:0009617">
    <property type="term" value="P:response to bacterium"/>
    <property type="evidence" value="ECO:0000318"/>
    <property type="project" value="GO_Central"/>
</dbReference>
<dbReference type="CDD" id="cd04983">
    <property type="entry name" value="IgV_TCR_alpha"/>
    <property type="match status" value="1"/>
</dbReference>
<dbReference type="Gene3D" id="2.60.40.10">
    <property type="entry name" value="Immunoglobulins"/>
    <property type="match status" value="1"/>
</dbReference>
<dbReference type="InterPro" id="IPR007110">
    <property type="entry name" value="Ig-like_dom"/>
</dbReference>
<dbReference type="InterPro" id="IPR036179">
    <property type="entry name" value="Ig-like_dom_sf"/>
</dbReference>
<dbReference type="InterPro" id="IPR013783">
    <property type="entry name" value="Ig-like_fold"/>
</dbReference>
<dbReference type="InterPro" id="IPR013106">
    <property type="entry name" value="Ig_V-set"/>
</dbReference>
<dbReference type="InterPro" id="IPR051896">
    <property type="entry name" value="TCR_alpha_variable"/>
</dbReference>
<dbReference type="PANTHER" id="PTHR19339:SF10">
    <property type="entry name" value="IG-LIKE DOMAIN-CONTAINING PROTEIN-RELATED"/>
    <property type="match status" value="1"/>
</dbReference>
<dbReference type="PANTHER" id="PTHR19339">
    <property type="entry name" value="T CELL RECEPTOR ALPHA VARIABLE 39"/>
    <property type="match status" value="1"/>
</dbReference>
<dbReference type="Pfam" id="PF07686">
    <property type="entry name" value="V-set"/>
    <property type="match status" value="1"/>
</dbReference>
<dbReference type="SMART" id="SM00406">
    <property type="entry name" value="IGv"/>
    <property type="match status" value="1"/>
</dbReference>
<dbReference type="SUPFAM" id="SSF48726">
    <property type="entry name" value="Immunoglobulin"/>
    <property type="match status" value="1"/>
</dbReference>
<dbReference type="PROSITE" id="PS50835">
    <property type="entry name" value="IG_LIKE"/>
    <property type="match status" value="1"/>
</dbReference>
<feature type="signal peptide" evidence="1">
    <location>
        <begin position="1"/>
        <end position="21"/>
    </location>
</feature>
<feature type="chain" id="PRO_0000443263" description="T cell receptor alpha variable 10" evidence="1">
    <location>
        <begin position="22"/>
        <end position="114"/>
    </location>
</feature>
<feature type="domain" description="Ig-like" evidence="2">
    <location>
        <begin position="23"/>
        <end position="114" status="greater than"/>
    </location>
</feature>
<feature type="glycosylation site" description="N-linked (GlcNAc...) asparagine" evidence="1">
    <location>
        <position position="39"/>
    </location>
</feature>
<feature type="glycosylation site" description="N-linked (GlcNAc...) asparagine" evidence="1">
    <location>
        <position position="45"/>
    </location>
</feature>
<feature type="disulfide bond" evidence="2">
    <location>
        <begin position="44"/>
        <end position="111"/>
    </location>
</feature>
<feature type="non-terminal residue">
    <location>
        <position position="114"/>
    </location>
</feature>
<gene>
    <name evidence="8" type="primary">TRAV10</name>
</gene>